<comment type="catalytic activity">
    <reaction evidence="1">
        <text>L-tryptophan + H2O = indole + pyruvate + NH4(+)</text>
        <dbReference type="Rhea" id="RHEA:19553"/>
        <dbReference type="ChEBI" id="CHEBI:15361"/>
        <dbReference type="ChEBI" id="CHEBI:15377"/>
        <dbReference type="ChEBI" id="CHEBI:16881"/>
        <dbReference type="ChEBI" id="CHEBI:28938"/>
        <dbReference type="ChEBI" id="CHEBI:57912"/>
        <dbReference type="EC" id="4.1.99.1"/>
    </reaction>
</comment>
<comment type="cofactor">
    <cofactor evidence="1">
        <name>pyridoxal 5'-phosphate</name>
        <dbReference type="ChEBI" id="CHEBI:597326"/>
    </cofactor>
</comment>
<comment type="pathway">
    <text evidence="1">Amino-acid degradation; L-tryptophan degradation via pyruvate pathway; indole and pyruvate from L-tryptophan: step 1/1.</text>
</comment>
<comment type="subunit">
    <text evidence="1">Homotetramer.</text>
</comment>
<comment type="similarity">
    <text evidence="1">Belongs to the beta-eliminating lyase family.</text>
</comment>
<gene>
    <name evidence="1" type="primary">tnaA</name>
    <name type="ordered locus">HNE_0810</name>
</gene>
<accession>Q0C406</accession>
<dbReference type="EC" id="4.1.99.1" evidence="1"/>
<dbReference type="EMBL" id="CP000158">
    <property type="protein sequence ID" value="ABI78586.1"/>
    <property type="molecule type" value="Genomic_DNA"/>
</dbReference>
<dbReference type="RefSeq" id="WP_011645837.1">
    <property type="nucleotide sequence ID" value="NC_008358.1"/>
</dbReference>
<dbReference type="SMR" id="Q0C406"/>
<dbReference type="STRING" id="228405.HNE_0810"/>
<dbReference type="KEGG" id="hne:HNE_0810"/>
<dbReference type="eggNOG" id="COG3033">
    <property type="taxonomic scope" value="Bacteria"/>
</dbReference>
<dbReference type="HOGENOM" id="CLU_047223_0_0_5"/>
<dbReference type="UniPathway" id="UPA00332">
    <property type="reaction ID" value="UER00452"/>
</dbReference>
<dbReference type="Proteomes" id="UP000001959">
    <property type="component" value="Chromosome"/>
</dbReference>
<dbReference type="GO" id="GO:0009034">
    <property type="term" value="F:tryptophanase activity"/>
    <property type="evidence" value="ECO:0007669"/>
    <property type="project" value="UniProtKB-UniRule"/>
</dbReference>
<dbReference type="Gene3D" id="3.90.1150.10">
    <property type="entry name" value="Aspartate Aminotransferase, domain 1"/>
    <property type="match status" value="1"/>
</dbReference>
<dbReference type="Gene3D" id="3.40.640.10">
    <property type="entry name" value="Type I PLP-dependent aspartate aminotransferase-like (Major domain)"/>
    <property type="match status" value="1"/>
</dbReference>
<dbReference type="HAMAP" id="MF_00544">
    <property type="entry name" value="Tryptophanase"/>
    <property type="match status" value="1"/>
</dbReference>
<dbReference type="InterPro" id="IPR001597">
    <property type="entry name" value="ArAA_b-elim_lyase/Thr_aldolase"/>
</dbReference>
<dbReference type="InterPro" id="IPR011166">
    <property type="entry name" value="Beta-eliminating_lyase"/>
</dbReference>
<dbReference type="InterPro" id="IPR015424">
    <property type="entry name" value="PyrdxlP-dep_Trfase"/>
</dbReference>
<dbReference type="InterPro" id="IPR015421">
    <property type="entry name" value="PyrdxlP-dep_Trfase_major"/>
</dbReference>
<dbReference type="InterPro" id="IPR015422">
    <property type="entry name" value="PyrdxlP-dep_Trfase_small"/>
</dbReference>
<dbReference type="InterPro" id="IPR013440">
    <property type="entry name" value="TNase"/>
</dbReference>
<dbReference type="NCBIfam" id="NF009709">
    <property type="entry name" value="PRK13238.1"/>
    <property type="match status" value="1"/>
</dbReference>
<dbReference type="PANTHER" id="PTHR32325">
    <property type="entry name" value="BETA-ELIMINATING LYASE-LIKE PROTEIN-RELATED"/>
    <property type="match status" value="1"/>
</dbReference>
<dbReference type="PANTHER" id="PTHR32325:SF4">
    <property type="entry name" value="TRYPTOPHANASE"/>
    <property type="match status" value="1"/>
</dbReference>
<dbReference type="Pfam" id="PF01212">
    <property type="entry name" value="Beta_elim_lyase"/>
    <property type="match status" value="1"/>
</dbReference>
<dbReference type="PIRSF" id="PIRSF001386">
    <property type="entry name" value="Trpase"/>
    <property type="match status" value="1"/>
</dbReference>
<dbReference type="SUPFAM" id="SSF53383">
    <property type="entry name" value="PLP-dependent transferases"/>
    <property type="match status" value="1"/>
</dbReference>
<sequence>MKTIIEPFRIKSVEPIRMTTREERARLLEAAGFNLFKLHSDDVIIDLLTDSGTSAMSAAQWGAVMTGDESYAGAPSFYRFEAAVKDLMDFTHIIPAHQGRAAEHLLFSLIAKTGDLIPSNTHFDTTRGNIEAMGAEALDLPIAEGRVPSLDHPFKGNMDLAALERVLTEEGGRIPAVMMTITNNAGGGQPVSLENIRGAARLAKAHGKAFYIDGCRFAENAWFIKLREEGQKDRSIKEIVRETFALADGMTMSAKKDAFANIGGWLALNNDALAERARTLLIQTEGFPTYGGLAGRDLDAIAQGLKEIIDEDYLRYRVRTNAYIAERLDAMGVPVVKPAGGHAVFIDARAFLPHIPPLEYPGQALTCAMYETGGIRACEIGTVMFGRKPDGTEAPGAMDLVRLAMPRRVYTQSHADYVVEVLEDVAATKDTLKGLRIVKEPPMMRHFTAAFERL</sequence>
<protein>
    <recommendedName>
        <fullName evidence="1">Tryptophanase</fullName>
        <ecNumber evidence="1">4.1.99.1</ecNumber>
    </recommendedName>
    <alternativeName>
        <fullName evidence="1">L-tryptophan indole-lyase</fullName>
        <shortName evidence="1">TNase</shortName>
    </alternativeName>
</protein>
<reference key="1">
    <citation type="journal article" date="2006" name="J. Bacteriol.">
        <title>Comparative genomic evidence for a close relationship between the dimorphic prosthecate bacteria Hyphomonas neptunium and Caulobacter crescentus.</title>
        <authorList>
            <person name="Badger J.H."/>
            <person name="Hoover T.R."/>
            <person name="Brun Y.V."/>
            <person name="Weiner R.M."/>
            <person name="Laub M.T."/>
            <person name="Alexandre G."/>
            <person name="Mrazek J."/>
            <person name="Ren Q."/>
            <person name="Paulsen I.T."/>
            <person name="Nelson K.E."/>
            <person name="Khouri H.M."/>
            <person name="Radune D."/>
            <person name="Sosa J."/>
            <person name="Dodson R.J."/>
            <person name="Sullivan S.A."/>
            <person name="Rosovitz M.J."/>
            <person name="Madupu R."/>
            <person name="Brinkac L.M."/>
            <person name="Durkin A.S."/>
            <person name="Daugherty S.C."/>
            <person name="Kothari S.P."/>
            <person name="Giglio M.G."/>
            <person name="Zhou L."/>
            <person name="Haft D.H."/>
            <person name="Selengut J.D."/>
            <person name="Davidsen T.M."/>
            <person name="Yang Q."/>
            <person name="Zafar N."/>
            <person name="Ward N.L."/>
        </authorList>
    </citation>
    <scope>NUCLEOTIDE SEQUENCE [LARGE SCALE GENOMIC DNA]</scope>
    <source>
        <strain>ATCC 15444</strain>
    </source>
</reference>
<keyword id="KW-0456">Lyase</keyword>
<keyword id="KW-0663">Pyridoxal phosphate</keyword>
<keyword id="KW-1185">Reference proteome</keyword>
<keyword id="KW-0823">Tryptophan catabolism</keyword>
<evidence type="ECO:0000255" key="1">
    <source>
        <dbReference type="HAMAP-Rule" id="MF_00544"/>
    </source>
</evidence>
<organism>
    <name type="scientific">Hyphomonas neptunium (strain ATCC 15444)</name>
    <dbReference type="NCBI Taxonomy" id="228405"/>
    <lineage>
        <taxon>Bacteria</taxon>
        <taxon>Pseudomonadati</taxon>
        <taxon>Pseudomonadota</taxon>
        <taxon>Alphaproteobacteria</taxon>
        <taxon>Hyphomonadales</taxon>
        <taxon>Hyphomonadaceae</taxon>
        <taxon>Hyphomonas</taxon>
    </lineage>
</organism>
<feature type="chain" id="PRO_1000128916" description="Tryptophanase">
    <location>
        <begin position="1"/>
        <end position="454"/>
    </location>
</feature>
<feature type="modified residue" description="N6-(pyridoxal phosphate)lysine" evidence="1">
    <location>
        <position position="256"/>
    </location>
</feature>
<proteinExistence type="inferred from homology"/>
<name>TNAA_HYPNA</name>